<name>YIDC_ECO45</name>
<reference key="1">
    <citation type="journal article" date="2009" name="PLoS Genet.">
        <title>Organised genome dynamics in the Escherichia coli species results in highly diverse adaptive paths.</title>
        <authorList>
            <person name="Touchon M."/>
            <person name="Hoede C."/>
            <person name="Tenaillon O."/>
            <person name="Barbe V."/>
            <person name="Baeriswyl S."/>
            <person name="Bidet P."/>
            <person name="Bingen E."/>
            <person name="Bonacorsi S."/>
            <person name="Bouchier C."/>
            <person name="Bouvet O."/>
            <person name="Calteau A."/>
            <person name="Chiapello H."/>
            <person name="Clermont O."/>
            <person name="Cruveiller S."/>
            <person name="Danchin A."/>
            <person name="Diard M."/>
            <person name="Dossat C."/>
            <person name="Karoui M.E."/>
            <person name="Frapy E."/>
            <person name="Garry L."/>
            <person name="Ghigo J.M."/>
            <person name="Gilles A.M."/>
            <person name="Johnson J."/>
            <person name="Le Bouguenec C."/>
            <person name="Lescat M."/>
            <person name="Mangenot S."/>
            <person name="Martinez-Jehanne V."/>
            <person name="Matic I."/>
            <person name="Nassif X."/>
            <person name="Oztas S."/>
            <person name="Petit M.A."/>
            <person name="Pichon C."/>
            <person name="Rouy Z."/>
            <person name="Ruf C.S."/>
            <person name="Schneider D."/>
            <person name="Tourret J."/>
            <person name="Vacherie B."/>
            <person name="Vallenet D."/>
            <person name="Medigue C."/>
            <person name="Rocha E.P.C."/>
            <person name="Denamur E."/>
        </authorList>
    </citation>
    <scope>NUCLEOTIDE SEQUENCE [LARGE SCALE GENOMIC DNA]</scope>
    <source>
        <strain>S88 / ExPEC</strain>
    </source>
</reference>
<keyword id="KW-0997">Cell inner membrane</keyword>
<keyword id="KW-1003">Cell membrane</keyword>
<keyword id="KW-0143">Chaperone</keyword>
<keyword id="KW-0472">Membrane</keyword>
<keyword id="KW-0653">Protein transport</keyword>
<keyword id="KW-1185">Reference proteome</keyword>
<keyword id="KW-0812">Transmembrane</keyword>
<keyword id="KW-1133">Transmembrane helix</keyword>
<keyword id="KW-0813">Transport</keyword>
<gene>
    <name evidence="1" type="primary">yidC</name>
    <name type="ordered locus">ECS88_4129</name>
</gene>
<feature type="chain" id="PRO_1000187656" description="Membrane protein insertase YidC">
    <location>
        <begin position="1"/>
        <end position="548"/>
    </location>
</feature>
<feature type="transmembrane region" description="Helical" evidence="1">
    <location>
        <begin position="6"/>
        <end position="26"/>
    </location>
</feature>
<feature type="transmembrane region" description="Helical" evidence="1">
    <location>
        <begin position="350"/>
        <end position="370"/>
    </location>
</feature>
<feature type="transmembrane region" description="Helical" evidence="1">
    <location>
        <begin position="420"/>
        <end position="440"/>
    </location>
</feature>
<feature type="transmembrane region" description="Helical" evidence="1">
    <location>
        <begin position="458"/>
        <end position="478"/>
    </location>
</feature>
<feature type="transmembrane region" description="Helical" evidence="1">
    <location>
        <begin position="499"/>
        <end position="519"/>
    </location>
</feature>
<feature type="region of interest" description="Disordered" evidence="2">
    <location>
        <begin position="28"/>
        <end position="55"/>
    </location>
</feature>
<feature type="compositionally biased region" description="Low complexity" evidence="2">
    <location>
        <begin position="30"/>
        <end position="50"/>
    </location>
</feature>
<comment type="function">
    <text evidence="1">Required for the insertion and/or proper folding and/or complex formation of integral membrane proteins into the membrane. Involved in integration of membrane proteins that insert both dependently and independently of the Sec translocase complex, as well as at least some lipoproteins. Aids folding of multispanning membrane proteins.</text>
</comment>
<comment type="subunit">
    <text evidence="1">Interacts with the Sec translocase complex via SecD. Specifically interacts with transmembrane segments of nascent integral membrane proteins during membrane integration.</text>
</comment>
<comment type="subcellular location">
    <subcellularLocation>
        <location evidence="1">Cell inner membrane</location>
        <topology evidence="1">Multi-pass membrane protein</topology>
    </subcellularLocation>
</comment>
<comment type="similarity">
    <text evidence="1">Belongs to the OXA1/ALB3/YidC family. Type 1 subfamily.</text>
</comment>
<protein>
    <recommendedName>
        <fullName evidence="1">Membrane protein insertase YidC</fullName>
    </recommendedName>
    <alternativeName>
        <fullName evidence="1">Foldase YidC</fullName>
    </alternativeName>
    <alternativeName>
        <fullName evidence="1">Membrane integrase YidC</fullName>
    </alternativeName>
    <alternativeName>
        <fullName evidence="1">Membrane protein YidC</fullName>
    </alternativeName>
</protein>
<dbReference type="EMBL" id="CU928161">
    <property type="protein sequence ID" value="CAR05335.1"/>
    <property type="molecule type" value="Genomic_DNA"/>
</dbReference>
<dbReference type="RefSeq" id="WP_000378258.1">
    <property type="nucleotide sequence ID" value="NC_011742.1"/>
</dbReference>
<dbReference type="SMR" id="B7MGC7"/>
<dbReference type="GeneID" id="93778448"/>
<dbReference type="KEGG" id="ecz:ECS88_4129"/>
<dbReference type="HOGENOM" id="CLU_016535_3_0_6"/>
<dbReference type="Proteomes" id="UP000000747">
    <property type="component" value="Chromosome"/>
</dbReference>
<dbReference type="GO" id="GO:0005886">
    <property type="term" value="C:plasma membrane"/>
    <property type="evidence" value="ECO:0007669"/>
    <property type="project" value="UniProtKB-SubCell"/>
</dbReference>
<dbReference type="GO" id="GO:0032977">
    <property type="term" value="F:membrane insertase activity"/>
    <property type="evidence" value="ECO:0007669"/>
    <property type="project" value="InterPro"/>
</dbReference>
<dbReference type="GO" id="GO:0051205">
    <property type="term" value="P:protein insertion into membrane"/>
    <property type="evidence" value="ECO:0007669"/>
    <property type="project" value="TreeGrafter"/>
</dbReference>
<dbReference type="GO" id="GO:0015031">
    <property type="term" value="P:protein transport"/>
    <property type="evidence" value="ECO:0007669"/>
    <property type="project" value="UniProtKB-KW"/>
</dbReference>
<dbReference type="CDD" id="cd20070">
    <property type="entry name" value="5TM_YidC_Alb3"/>
    <property type="match status" value="1"/>
</dbReference>
<dbReference type="CDD" id="cd19961">
    <property type="entry name" value="EcYidC-like_peri"/>
    <property type="match status" value="1"/>
</dbReference>
<dbReference type="FunFam" id="2.70.98.90:FF:000001">
    <property type="entry name" value="Membrane protein insertase YidC"/>
    <property type="match status" value="1"/>
</dbReference>
<dbReference type="Gene3D" id="2.70.98.90">
    <property type="match status" value="1"/>
</dbReference>
<dbReference type="HAMAP" id="MF_01810">
    <property type="entry name" value="YidC_type1"/>
    <property type="match status" value="1"/>
</dbReference>
<dbReference type="InterPro" id="IPR019998">
    <property type="entry name" value="Membr_insert_YidC"/>
</dbReference>
<dbReference type="InterPro" id="IPR028053">
    <property type="entry name" value="Membr_insert_YidC_N"/>
</dbReference>
<dbReference type="InterPro" id="IPR001708">
    <property type="entry name" value="YidC/ALB3/OXA1/COX18"/>
</dbReference>
<dbReference type="InterPro" id="IPR028055">
    <property type="entry name" value="YidC/Oxa/ALB_C"/>
</dbReference>
<dbReference type="InterPro" id="IPR047196">
    <property type="entry name" value="YidC_ALB_C"/>
</dbReference>
<dbReference type="InterPro" id="IPR038221">
    <property type="entry name" value="YidC_periplasmic_sf"/>
</dbReference>
<dbReference type="NCBIfam" id="NF002351">
    <property type="entry name" value="PRK01318.1-1"/>
    <property type="match status" value="1"/>
</dbReference>
<dbReference type="NCBIfam" id="NF002352">
    <property type="entry name" value="PRK01318.1-3"/>
    <property type="match status" value="1"/>
</dbReference>
<dbReference type="NCBIfam" id="NF002353">
    <property type="entry name" value="PRK01318.1-4"/>
    <property type="match status" value="1"/>
</dbReference>
<dbReference type="NCBIfam" id="TIGR03593">
    <property type="entry name" value="yidC_nterm"/>
    <property type="match status" value="1"/>
</dbReference>
<dbReference type="NCBIfam" id="TIGR03592">
    <property type="entry name" value="yidC_oxa1_cterm"/>
    <property type="match status" value="1"/>
</dbReference>
<dbReference type="PANTHER" id="PTHR12428:SF65">
    <property type="entry name" value="CYTOCHROME C OXIDASE ASSEMBLY PROTEIN COX18, MITOCHONDRIAL"/>
    <property type="match status" value="1"/>
</dbReference>
<dbReference type="PANTHER" id="PTHR12428">
    <property type="entry name" value="OXA1"/>
    <property type="match status" value="1"/>
</dbReference>
<dbReference type="Pfam" id="PF02096">
    <property type="entry name" value="60KD_IMP"/>
    <property type="match status" value="1"/>
</dbReference>
<dbReference type="Pfam" id="PF14849">
    <property type="entry name" value="YidC_periplas"/>
    <property type="match status" value="1"/>
</dbReference>
<dbReference type="PRINTS" id="PR00701">
    <property type="entry name" value="60KDINNERMP"/>
</dbReference>
<dbReference type="PRINTS" id="PR01900">
    <property type="entry name" value="YIDCPROTEIN"/>
</dbReference>
<organism>
    <name type="scientific">Escherichia coli O45:K1 (strain S88 / ExPEC)</name>
    <dbReference type="NCBI Taxonomy" id="585035"/>
    <lineage>
        <taxon>Bacteria</taxon>
        <taxon>Pseudomonadati</taxon>
        <taxon>Pseudomonadota</taxon>
        <taxon>Gammaproteobacteria</taxon>
        <taxon>Enterobacterales</taxon>
        <taxon>Enterobacteriaceae</taxon>
        <taxon>Escherichia</taxon>
    </lineage>
</organism>
<accession>B7MGC7</accession>
<evidence type="ECO:0000255" key="1">
    <source>
        <dbReference type="HAMAP-Rule" id="MF_01810"/>
    </source>
</evidence>
<evidence type="ECO:0000256" key="2">
    <source>
        <dbReference type="SAM" id="MobiDB-lite"/>
    </source>
</evidence>
<proteinExistence type="inferred from homology"/>
<sequence length="548" mass="61540">MDSQRNLLVIALLFVSFMIWQAWEQDKNPQPQAQQTTQTTTTAAGSAADQGVPASGQGKLISVKTDVLDLTINTRGGDVEQALLPAYPKELNSTQPFQLLETSPQFIYQAQSGLTGRDGPDNPANGPRPLYNVEKDAYVLAEGQNELQVPMTYTDAAGNTFTKTFVLKRGDYAVNVNYNVQNAGEKPLEISTFGQLKQSITLPPHLDTGSSNFALHTFRGAAYSTPDEKYEKYKFDTIADNENLNISSKGGWVAMLQQYFATAWIPHNDGTNNFYTANLGNGIAAIGYKSQPVLVQPGQTGAMNSTLWVGPEIQDKMAAVAPHLDLTVDYGWLWFISQPLFKLLKWIHSFVGNWGFSIIIITFIVRGIMYPLTKAQYTSMAKMRMLQPKIQAMRERLGDDKQRISQEMMALYKAEKVNPLGGCFPLLIQMPIFLALYYMLMGSVELRQAPFALWIHDLSAQDPYYILPILMGVTMFFIQKMSPTTVTDPMQQKIMTFMPVIFTVFFLWFPSGLVLYYIVSNLVTIIQQQLIYRGLEKRGLHSREKKKS</sequence>